<accession>A6TD44</accession>
<feature type="chain" id="PRO_1000008962" description="Sulfate adenylyltransferase subunit 2">
    <location>
        <begin position="1"/>
        <end position="302"/>
    </location>
</feature>
<protein>
    <recommendedName>
        <fullName evidence="1">Sulfate adenylyltransferase subunit 2</fullName>
        <ecNumber evidence="1">2.7.7.4</ecNumber>
    </recommendedName>
    <alternativeName>
        <fullName evidence="1">ATP-sulfurylase small subunit</fullName>
    </alternativeName>
    <alternativeName>
        <fullName evidence="1">Sulfate adenylate transferase</fullName>
        <shortName evidence="1">SAT</shortName>
    </alternativeName>
</protein>
<name>CYSD_KLEP7</name>
<sequence>MDQKRLTHLRQLEAESIHIIREVAAEFSNPVMMYSIGKDSSVMLHLARKAFYPGTLPFPLLHVDTGWKFREMYEFRDRTAKAYGCELLVHKNPEGVAMGINPFVHGSAKHTDIMKTEGLKQALNKYGFDAAFGGARRDEEKSRAKERIYSFRDRFHRWDPKNQRPELWHNYNGQINKGESIRVFPLSNWTELDIWQYIYLENIEIVPLYLAAERPVLERDGMLMMIDDDRIDLQPGEVIEKRMVRFRTLGCWPLTGAVESEAQTLPEIIEEMLVSTTSERQGRVIDRDQAGSMELKKRQGYF</sequence>
<proteinExistence type="inferred from homology"/>
<comment type="function">
    <text evidence="1">With CysN forms the ATP sulfurylase (ATPS) that catalyzes the adenylation of sulfate producing adenosine 5'-phosphosulfate (APS) and diphosphate, the first enzymatic step in sulfur assimilation pathway. APS synthesis involves the formation of a high-energy phosphoric-sulfuric acid anhydride bond driven by GTP hydrolysis by CysN coupled to ATP hydrolysis by CysD.</text>
</comment>
<comment type="catalytic activity">
    <reaction evidence="1">
        <text>sulfate + ATP + H(+) = adenosine 5'-phosphosulfate + diphosphate</text>
        <dbReference type="Rhea" id="RHEA:18133"/>
        <dbReference type="ChEBI" id="CHEBI:15378"/>
        <dbReference type="ChEBI" id="CHEBI:16189"/>
        <dbReference type="ChEBI" id="CHEBI:30616"/>
        <dbReference type="ChEBI" id="CHEBI:33019"/>
        <dbReference type="ChEBI" id="CHEBI:58243"/>
        <dbReference type="EC" id="2.7.7.4"/>
    </reaction>
</comment>
<comment type="pathway">
    <text evidence="1">Sulfur metabolism; hydrogen sulfide biosynthesis; sulfite from sulfate: step 1/3.</text>
</comment>
<comment type="subunit">
    <text evidence="1">Heterodimer composed of CysD, the smaller subunit, and CysN.</text>
</comment>
<comment type="similarity">
    <text evidence="1">Belongs to the PAPS reductase family. CysD subfamily.</text>
</comment>
<reference key="1">
    <citation type="submission" date="2006-09" db="EMBL/GenBank/DDBJ databases">
        <authorList>
            <consortium name="The Klebsiella pneumonia Genome Sequencing Project"/>
            <person name="McClelland M."/>
            <person name="Sanderson E.K."/>
            <person name="Spieth J."/>
            <person name="Clifton W.S."/>
            <person name="Latreille P."/>
            <person name="Sabo A."/>
            <person name="Pepin K."/>
            <person name="Bhonagiri V."/>
            <person name="Porwollik S."/>
            <person name="Ali J."/>
            <person name="Wilson R.K."/>
        </authorList>
    </citation>
    <scope>NUCLEOTIDE SEQUENCE [LARGE SCALE GENOMIC DNA]</scope>
    <source>
        <strain>ATCC 700721 / MGH 78578</strain>
    </source>
</reference>
<evidence type="ECO:0000255" key="1">
    <source>
        <dbReference type="HAMAP-Rule" id="MF_00064"/>
    </source>
</evidence>
<organism>
    <name type="scientific">Klebsiella pneumoniae subsp. pneumoniae (strain ATCC 700721 / MGH 78578)</name>
    <dbReference type="NCBI Taxonomy" id="272620"/>
    <lineage>
        <taxon>Bacteria</taxon>
        <taxon>Pseudomonadati</taxon>
        <taxon>Pseudomonadota</taxon>
        <taxon>Gammaproteobacteria</taxon>
        <taxon>Enterobacterales</taxon>
        <taxon>Enterobacteriaceae</taxon>
        <taxon>Klebsiella/Raoultella group</taxon>
        <taxon>Klebsiella</taxon>
        <taxon>Klebsiella pneumoniae complex</taxon>
    </lineage>
</organism>
<dbReference type="EC" id="2.7.7.4" evidence="1"/>
<dbReference type="EMBL" id="CP000647">
    <property type="protein sequence ID" value="ABR78515.1"/>
    <property type="molecule type" value="Genomic_DNA"/>
</dbReference>
<dbReference type="RefSeq" id="WP_002915160.1">
    <property type="nucleotide sequence ID" value="NC_009648.1"/>
</dbReference>
<dbReference type="SMR" id="A6TD44"/>
<dbReference type="STRING" id="272620.KPN_03114"/>
<dbReference type="PaxDb" id="272620-KPN_03114"/>
<dbReference type="EnsemblBacteria" id="ABR78515">
    <property type="protein sequence ID" value="ABR78515"/>
    <property type="gene ID" value="KPN_03114"/>
</dbReference>
<dbReference type="GeneID" id="93271590"/>
<dbReference type="KEGG" id="kpn:KPN_03114"/>
<dbReference type="HOGENOM" id="CLU_043026_0_0_6"/>
<dbReference type="UniPathway" id="UPA00140">
    <property type="reaction ID" value="UER00204"/>
</dbReference>
<dbReference type="Proteomes" id="UP000000265">
    <property type="component" value="Chromosome"/>
</dbReference>
<dbReference type="GO" id="GO:0005524">
    <property type="term" value="F:ATP binding"/>
    <property type="evidence" value="ECO:0007669"/>
    <property type="project" value="UniProtKB-KW"/>
</dbReference>
<dbReference type="GO" id="GO:0004781">
    <property type="term" value="F:sulfate adenylyltransferase (ATP) activity"/>
    <property type="evidence" value="ECO:0007669"/>
    <property type="project" value="UniProtKB-UniRule"/>
</dbReference>
<dbReference type="GO" id="GO:0070814">
    <property type="term" value="P:hydrogen sulfide biosynthetic process"/>
    <property type="evidence" value="ECO:0007669"/>
    <property type="project" value="UniProtKB-UniRule"/>
</dbReference>
<dbReference type="GO" id="GO:0000103">
    <property type="term" value="P:sulfate assimilation"/>
    <property type="evidence" value="ECO:0007669"/>
    <property type="project" value="UniProtKB-UniRule"/>
</dbReference>
<dbReference type="CDD" id="cd23946">
    <property type="entry name" value="Sulfate_adenylyltransferase_2"/>
    <property type="match status" value="1"/>
</dbReference>
<dbReference type="FunFam" id="3.40.50.620:FF:000002">
    <property type="entry name" value="Sulfate adenylyltransferase subunit 2"/>
    <property type="match status" value="1"/>
</dbReference>
<dbReference type="Gene3D" id="3.40.50.620">
    <property type="entry name" value="HUPs"/>
    <property type="match status" value="1"/>
</dbReference>
<dbReference type="HAMAP" id="MF_00064">
    <property type="entry name" value="Sulf_adenylyltr_sub2"/>
    <property type="match status" value="1"/>
</dbReference>
<dbReference type="InterPro" id="IPR002500">
    <property type="entry name" value="PAPS_reduct_dom"/>
</dbReference>
<dbReference type="InterPro" id="IPR014729">
    <property type="entry name" value="Rossmann-like_a/b/a_fold"/>
</dbReference>
<dbReference type="InterPro" id="IPR011784">
    <property type="entry name" value="SO4_adenylTrfase_ssu"/>
</dbReference>
<dbReference type="InterPro" id="IPR050128">
    <property type="entry name" value="Sulfate_adenylyltrnsfr_sub2"/>
</dbReference>
<dbReference type="NCBIfam" id="TIGR02039">
    <property type="entry name" value="CysD"/>
    <property type="match status" value="1"/>
</dbReference>
<dbReference type="NCBIfam" id="NF003587">
    <property type="entry name" value="PRK05253.1"/>
    <property type="match status" value="1"/>
</dbReference>
<dbReference type="NCBIfam" id="NF009214">
    <property type="entry name" value="PRK12563.1"/>
    <property type="match status" value="1"/>
</dbReference>
<dbReference type="PANTHER" id="PTHR43196">
    <property type="entry name" value="SULFATE ADENYLYLTRANSFERASE SUBUNIT 2"/>
    <property type="match status" value="1"/>
</dbReference>
<dbReference type="PANTHER" id="PTHR43196:SF1">
    <property type="entry name" value="SULFATE ADENYLYLTRANSFERASE SUBUNIT 2"/>
    <property type="match status" value="1"/>
</dbReference>
<dbReference type="Pfam" id="PF01507">
    <property type="entry name" value="PAPS_reduct"/>
    <property type="match status" value="1"/>
</dbReference>
<dbReference type="PIRSF" id="PIRSF002936">
    <property type="entry name" value="CysDAde_trans"/>
    <property type="match status" value="1"/>
</dbReference>
<dbReference type="SUPFAM" id="SSF52402">
    <property type="entry name" value="Adenine nucleotide alpha hydrolases-like"/>
    <property type="match status" value="1"/>
</dbReference>
<gene>
    <name evidence="1" type="primary">cysD</name>
    <name type="ordered locus">KPN78578_30540</name>
    <name type="ORF">KPN_03114</name>
</gene>
<keyword id="KW-0067">ATP-binding</keyword>
<keyword id="KW-0547">Nucleotide-binding</keyword>
<keyword id="KW-0548">Nucleotidyltransferase</keyword>
<keyword id="KW-0808">Transferase</keyword>